<sequence>RTCFITPDVKSKPCPPGQEVCYTETWCDGFCGIRGKRVELGCAATCPTPKKTGIDIQCCSTDDCNTFPLRP</sequence>
<dbReference type="PIR" id="S00035">
    <property type="entry name" value="S00035"/>
</dbReference>
<dbReference type="SMR" id="P13495"/>
<dbReference type="Proteomes" id="UP000472273">
    <property type="component" value="Unplaced"/>
</dbReference>
<dbReference type="GO" id="GO:0005576">
    <property type="term" value="C:extracellular region"/>
    <property type="evidence" value="ECO:0007669"/>
    <property type="project" value="UniProtKB-SubCell"/>
</dbReference>
<dbReference type="GO" id="GO:0030550">
    <property type="term" value="F:acetylcholine receptor inhibitor activity"/>
    <property type="evidence" value="ECO:0007669"/>
    <property type="project" value="UniProtKB-KW"/>
</dbReference>
<dbReference type="GO" id="GO:0099106">
    <property type="term" value="F:ion channel regulator activity"/>
    <property type="evidence" value="ECO:0007669"/>
    <property type="project" value="UniProtKB-KW"/>
</dbReference>
<dbReference type="GO" id="GO:0090729">
    <property type="term" value="F:toxin activity"/>
    <property type="evidence" value="ECO:0007669"/>
    <property type="project" value="UniProtKB-KW"/>
</dbReference>
<dbReference type="CDD" id="cd00206">
    <property type="entry name" value="TFP_snake_toxin"/>
    <property type="match status" value="1"/>
</dbReference>
<dbReference type="Gene3D" id="2.10.60.10">
    <property type="entry name" value="CD59"/>
    <property type="match status" value="1"/>
</dbReference>
<dbReference type="InterPro" id="IPR003571">
    <property type="entry name" value="Snake_3FTx"/>
</dbReference>
<dbReference type="InterPro" id="IPR045860">
    <property type="entry name" value="Snake_toxin-like_sf"/>
</dbReference>
<dbReference type="InterPro" id="IPR018354">
    <property type="entry name" value="Snake_toxin_con_site"/>
</dbReference>
<dbReference type="InterPro" id="IPR054131">
    <property type="entry name" value="Toxin_cobra-type"/>
</dbReference>
<dbReference type="Pfam" id="PF21947">
    <property type="entry name" value="Toxin_cobra-type"/>
    <property type="match status" value="1"/>
</dbReference>
<dbReference type="SUPFAM" id="SSF57302">
    <property type="entry name" value="Snake toxin-like"/>
    <property type="match status" value="1"/>
</dbReference>
<dbReference type="PROSITE" id="PS00272">
    <property type="entry name" value="SNAKE_TOXIN"/>
    <property type="match status" value="1"/>
</dbReference>
<proteinExistence type="evidence at protein level"/>
<feature type="chain" id="PRO_0000093563" description="Pseudonajatoxin b">
    <location>
        <begin position="1"/>
        <end position="71"/>
    </location>
</feature>
<feature type="disulfide bond" evidence="1">
    <location>
        <begin position="3"/>
        <end position="21"/>
    </location>
</feature>
<feature type="disulfide bond" evidence="1">
    <location>
        <begin position="14"/>
        <end position="42"/>
    </location>
</feature>
<feature type="disulfide bond" evidence="1">
    <location>
        <begin position="27"/>
        <end position="31"/>
    </location>
</feature>
<feature type="disulfide bond" evidence="1">
    <location>
        <begin position="46"/>
        <end position="58"/>
    </location>
</feature>
<feature type="disulfide bond" evidence="1">
    <location>
        <begin position="59"/>
        <end position="64"/>
    </location>
</feature>
<feature type="sequence conflict" description="In Ref. 2; AA sequence." evidence="4" ref="2">
    <original>C</original>
    <variation>E</variation>
    <location>
        <position position="3"/>
    </location>
</feature>
<accession>P13495</accession>
<evidence type="ECO:0000250" key="1"/>
<evidence type="ECO:0000250" key="2">
    <source>
        <dbReference type="UniProtKB" id="P60615"/>
    </source>
</evidence>
<evidence type="ECO:0000269" key="3">
    <source>
    </source>
</evidence>
<evidence type="ECO:0000305" key="4"/>
<organism>
    <name type="scientific">Pseudonaja textilis</name>
    <name type="common">Eastern brown snake</name>
    <dbReference type="NCBI Taxonomy" id="8673"/>
    <lineage>
        <taxon>Eukaryota</taxon>
        <taxon>Metazoa</taxon>
        <taxon>Chordata</taxon>
        <taxon>Craniata</taxon>
        <taxon>Vertebrata</taxon>
        <taxon>Euteleostomi</taxon>
        <taxon>Lepidosauria</taxon>
        <taxon>Squamata</taxon>
        <taxon>Bifurcata</taxon>
        <taxon>Unidentata</taxon>
        <taxon>Episquamata</taxon>
        <taxon>Toxicofera</taxon>
        <taxon>Serpentes</taxon>
        <taxon>Colubroidea</taxon>
        <taxon>Elapidae</taxon>
        <taxon>Hydrophiinae</taxon>
        <taxon>Pseudonaja</taxon>
    </lineage>
</organism>
<protein>
    <recommendedName>
        <fullName>Pseudonajatoxin b</fullName>
    </recommendedName>
    <alternativeName>
        <fullName>Long neurotoxin B</fullName>
    </alternativeName>
</protein>
<comment type="function">
    <text evidence="2">Binds with high affinity to muscular (alpha-1/CHRNA1) and neuronal (alpha-7/CHRNA7) nicotinic acetylcholine receptor (nAChR) and inhibits acetylcholine from binding to the receptor, thereby impairing neuromuscular and neuronal transmission.</text>
</comment>
<comment type="subcellular location">
    <subcellularLocation>
        <location evidence="3">Secreted</location>
    </subcellularLocation>
</comment>
<comment type="tissue specificity">
    <text evidence="4">Expressed by the venom gland.</text>
</comment>
<comment type="toxic dose">
    <text evidence="3">LD(50) is 0.015 mg/kg by intraperitoneal injection into mice.</text>
</comment>
<comment type="similarity">
    <text evidence="4">Belongs to the three-finger toxin family. Long-chain subfamily. Type II alpha-neurotoxin sub-subfamily.</text>
</comment>
<keyword id="KW-0008">Acetylcholine receptor inhibiting toxin</keyword>
<keyword id="KW-0903">Direct protein sequencing</keyword>
<keyword id="KW-1015">Disulfide bond</keyword>
<keyword id="KW-0872">Ion channel impairing toxin</keyword>
<keyword id="KW-0528">Neurotoxin</keyword>
<keyword id="KW-0629">Postsynaptic neurotoxin</keyword>
<keyword id="KW-1185">Reference proteome</keyword>
<keyword id="KW-0964">Secreted</keyword>
<keyword id="KW-0800">Toxin</keyword>
<reference key="1">
    <citation type="journal article" date="1987" name="Eur. J. Biochem.">
        <title>Pseudonajatoxin b: unusual amino acid sequence of a lethal neurotoxin from the venom of the Australian common brown snake, Pseudonaja textilis.</title>
        <authorList>
            <person name="Tyler M.I."/>
            <person name="Spence I."/>
            <person name="Barnett D."/>
            <person name="Howden M.E.H."/>
        </authorList>
    </citation>
    <scope>PROTEIN SEQUENCE</scope>
    <scope>TOXIC DOSE</scope>
    <scope>SUBCELLULAR LOCATION</scope>
    <source>
        <tissue>Venom</tissue>
    </source>
</reference>
<reference key="2">
    <citation type="journal article" date="2006" name="Mol. Cell. Proteomics">
        <title>Molecular diversity in venom from the Australian Brown snake, Pseudonaja textilis.</title>
        <authorList>
            <person name="Birrell G.W."/>
            <person name="Earl S."/>
            <person name="Masci P.P."/>
            <person name="de Jersey J."/>
            <person name="Wallis T.P."/>
            <person name="Gorman J.J."/>
            <person name="Lavin M.F."/>
        </authorList>
    </citation>
    <scope>PARTIAL PROTEIN SEQUENCE</scope>
    <source>
        <tissue>Venom</tissue>
    </source>
</reference>
<name>3L2B_PSETE</name>